<proteinExistence type="evidence at protein level"/>
<accession>P15874</accession>
<organism>
    <name type="scientific">Bacillus subtilis (strain 168)</name>
    <dbReference type="NCBI Taxonomy" id="224308"/>
    <lineage>
        <taxon>Bacteria</taxon>
        <taxon>Bacillati</taxon>
        <taxon>Bacillota</taxon>
        <taxon>Bacilli</taxon>
        <taxon>Bacillales</taxon>
        <taxon>Bacillaceae</taxon>
        <taxon>Bacillus</taxon>
    </lineage>
</organism>
<feature type="initiator methionine" description="Removed" evidence="3">
    <location>
        <position position="1"/>
    </location>
</feature>
<feature type="chain" id="PRO_0000113742" description="Protein GrpE">
    <location>
        <begin position="2"/>
        <end position="187"/>
    </location>
</feature>
<feature type="region of interest" description="Disordered" evidence="2">
    <location>
        <begin position="1"/>
        <end position="38"/>
    </location>
</feature>
<feature type="compositionally biased region" description="Acidic residues" evidence="2">
    <location>
        <begin position="11"/>
        <end position="34"/>
    </location>
</feature>
<feature type="sequence variant" description="In strain: IS58.">
    <original>S</original>
    <variation>H</variation>
    <location>
        <position position="2"/>
    </location>
</feature>
<feature type="sequence variant" description="In strain: IS58.">
    <original>K</original>
    <variation>T</variation>
    <location>
        <position position="5"/>
    </location>
</feature>
<name>GRPE_BACSU</name>
<evidence type="ECO:0000255" key="1">
    <source>
        <dbReference type="HAMAP-Rule" id="MF_01151"/>
    </source>
</evidence>
<evidence type="ECO:0000256" key="2">
    <source>
        <dbReference type="SAM" id="MobiDB-lite"/>
    </source>
</evidence>
<evidence type="ECO:0000269" key="3">
    <source>
    </source>
</evidence>
<evidence type="ECO:0000305" key="4"/>
<keyword id="KW-0143">Chaperone</keyword>
<keyword id="KW-0963">Cytoplasm</keyword>
<keyword id="KW-0903">Direct protein sequencing</keyword>
<keyword id="KW-1185">Reference proteome</keyword>
<keyword id="KW-0346">Stress response</keyword>
<comment type="function">
    <text evidence="1">Participates actively in the response to hyperosmotic and heat shock by preventing the aggregation of stress-denatured proteins, in association with DnaK and GrpE. It is the nucleotide exchange factor for DnaK and may function as a thermosensor. Unfolded proteins bind initially to DnaJ; upon interaction with the DnaJ-bound protein, DnaK hydrolyzes its bound ATP, resulting in the formation of a stable complex. GrpE releases ADP from DnaK; ATP binding to DnaK triggers the release of the substrate protein, thus completing the reaction cycle. Several rounds of ATP-dependent interactions between DnaJ, DnaK and GrpE are required for fully efficient folding.</text>
</comment>
<comment type="subunit">
    <text evidence="1">Homodimer.</text>
</comment>
<comment type="subcellular location">
    <subcellularLocation>
        <location evidence="4">Cytoplasm</location>
    </subcellularLocation>
</comment>
<comment type="similarity">
    <text evidence="1">Belongs to the GrpE family.</text>
</comment>
<sequence length="187" mass="21683">MSEEKQTVEQNETEEQEIIEEQAAADEQQEETNESELLQNQINELQGLLEEKENKLLRVQADFENYKRRSRLEMEASQKYRSQNIVTDLLPALDSFERALQVEADNEQTKSLLQGMEMVHRQLVEALKKEGVEAIEAVGQEFDPNLHQAVMQAEDENYGSNIVVEEMQKGYKLKDRVIRPSMVKVNQ</sequence>
<reference key="1">
    <citation type="journal article" date="1990" name="Nucleic Acids Res.">
        <title>Nucleotide sequence of a Bacillus subtilis gene homologous to the grpE gene of E. coli located immediately upstream of the dnaK gene.</title>
        <authorList>
            <person name="Wetzstein M."/>
            <person name="Schumann W."/>
        </authorList>
    </citation>
    <scope>NUCLEOTIDE SEQUENCE [GENOMIC DNA]</scope>
    <source>
        <strain>168 / MB11</strain>
    </source>
</reference>
<reference key="2">
    <citation type="journal article" date="1992" name="J. Bacteriol.">
        <title>Cloning, sequencing, and molecular analysis of the dnaK locus from Bacillus subtilis.</title>
        <authorList>
            <person name="Wetzstein M."/>
            <person name="Voelker U."/>
            <person name="Dedio J."/>
            <person name="Loebau S."/>
            <person name="Zuber U."/>
            <person name="Schiesswohl M."/>
            <person name="Herget C."/>
            <person name="Hecker M."/>
            <person name="Schumann W."/>
        </authorList>
    </citation>
    <scope>NUCLEOTIDE SEQUENCE [GENOMIC DNA]</scope>
    <source>
        <strain>168 / MB11</strain>
    </source>
</reference>
<reference key="3">
    <citation type="journal article" date="1996" name="Microbiology">
        <title>Systematic sequencing of the 283 kb 210 degrees-232 degrees region of the Bacillus subtilis genome containing the skin element and many sporulation genes.</title>
        <authorList>
            <person name="Mizuno M."/>
            <person name="Masuda S."/>
            <person name="Takemaru K."/>
            <person name="Hosono S."/>
            <person name="Sato T."/>
            <person name="Takeuchi M."/>
            <person name="Kobayashi Y."/>
        </authorList>
    </citation>
    <scope>NUCLEOTIDE SEQUENCE [GENOMIC DNA]</scope>
    <source>
        <strain>168 / JH642</strain>
    </source>
</reference>
<reference key="4">
    <citation type="journal article" date="1997" name="Nature">
        <title>The complete genome sequence of the Gram-positive bacterium Bacillus subtilis.</title>
        <authorList>
            <person name="Kunst F."/>
            <person name="Ogasawara N."/>
            <person name="Moszer I."/>
            <person name="Albertini A.M."/>
            <person name="Alloni G."/>
            <person name="Azevedo V."/>
            <person name="Bertero M.G."/>
            <person name="Bessieres P."/>
            <person name="Bolotin A."/>
            <person name="Borchert S."/>
            <person name="Borriss R."/>
            <person name="Boursier L."/>
            <person name="Brans A."/>
            <person name="Braun M."/>
            <person name="Brignell S.C."/>
            <person name="Bron S."/>
            <person name="Brouillet S."/>
            <person name="Bruschi C.V."/>
            <person name="Caldwell B."/>
            <person name="Capuano V."/>
            <person name="Carter N.M."/>
            <person name="Choi S.-K."/>
            <person name="Codani J.-J."/>
            <person name="Connerton I.F."/>
            <person name="Cummings N.J."/>
            <person name="Daniel R.A."/>
            <person name="Denizot F."/>
            <person name="Devine K.M."/>
            <person name="Duesterhoeft A."/>
            <person name="Ehrlich S.D."/>
            <person name="Emmerson P.T."/>
            <person name="Entian K.-D."/>
            <person name="Errington J."/>
            <person name="Fabret C."/>
            <person name="Ferrari E."/>
            <person name="Foulger D."/>
            <person name="Fritz C."/>
            <person name="Fujita M."/>
            <person name="Fujita Y."/>
            <person name="Fuma S."/>
            <person name="Galizzi A."/>
            <person name="Galleron N."/>
            <person name="Ghim S.-Y."/>
            <person name="Glaser P."/>
            <person name="Goffeau A."/>
            <person name="Golightly E.J."/>
            <person name="Grandi G."/>
            <person name="Guiseppi G."/>
            <person name="Guy B.J."/>
            <person name="Haga K."/>
            <person name="Haiech J."/>
            <person name="Harwood C.R."/>
            <person name="Henaut A."/>
            <person name="Hilbert H."/>
            <person name="Holsappel S."/>
            <person name="Hosono S."/>
            <person name="Hullo M.-F."/>
            <person name="Itaya M."/>
            <person name="Jones L.-M."/>
            <person name="Joris B."/>
            <person name="Karamata D."/>
            <person name="Kasahara Y."/>
            <person name="Klaerr-Blanchard M."/>
            <person name="Klein C."/>
            <person name="Kobayashi Y."/>
            <person name="Koetter P."/>
            <person name="Koningstein G."/>
            <person name="Krogh S."/>
            <person name="Kumano M."/>
            <person name="Kurita K."/>
            <person name="Lapidus A."/>
            <person name="Lardinois S."/>
            <person name="Lauber J."/>
            <person name="Lazarevic V."/>
            <person name="Lee S.-M."/>
            <person name="Levine A."/>
            <person name="Liu H."/>
            <person name="Masuda S."/>
            <person name="Mauel C."/>
            <person name="Medigue C."/>
            <person name="Medina N."/>
            <person name="Mellado R.P."/>
            <person name="Mizuno M."/>
            <person name="Moestl D."/>
            <person name="Nakai S."/>
            <person name="Noback M."/>
            <person name="Noone D."/>
            <person name="O'Reilly M."/>
            <person name="Ogawa K."/>
            <person name="Ogiwara A."/>
            <person name="Oudega B."/>
            <person name="Park S.-H."/>
            <person name="Parro V."/>
            <person name="Pohl T.M."/>
            <person name="Portetelle D."/>
            <person name="Porwollik S."/>
            <person name="Prescott A.M."/>
            <person name="Presecan E."/>
            <person name="Pujic P."/>
            <person name="Purnelle B."/>
            <person name="Rapoport G."/>
            <person name="Rey M."/>
            <person name="Reynolds S."/>
            <person name="Rieger M."/>
            <person name="Rivolta C."/>
            <person name="Rocha E."/>
            <person name="Roche B."/>
            <person name="Rose M."/>
            <person name="Sadaie Y."/>
            <person name="Sato T."/>
            <person name="Scanlan E."/>
            <person name="Schleich S."/>
            <person name="Schroeter R."/>
            <person name="Scoffone F."/>
            <person name="Sekiguchi J."/>
            <person name="Sekowska A."/>
            <person name="Seror S.J."/>
            <person name="Serror P."/>
            <person name="Shin B.-S."/>
            <person name="Soldo B."/>
            <person name="Sorokin A."/>
            <person name="Tacconi E."/>
            <person name="Takagi T."/>
            <person name="Takahashi H."/>
            <person name="Takemaru K."/>
            <person name="Takeuchi M."/>
            <person name="Tamakoshi A."/>
            <person name="Tanaka T."/>
            <person name="Terpstra P."/>
            <person name="Tognoni A."/>
            <person name="Tosato V."/>
            <person name="Uchiyama S."/>
            <person name="Vandenbol M."/>
            <person name="Vannier F."/>
            <person name="Vassarotti A."/>
            <person name="Viari A."/>
            <person name="Wambutt R."/>
            <person name="Wedler E."/>
            <person name="Wedler H."/>
            <person name="Weitzenegger T."/>
            <person name="Winters P."/>
            <person name="Wipat A."/>
            <person name="Yamamoto H."/>
            <person name="Yamane K."/>
            <person name="Yasumoto K."/>
            <person name="Yata K."/>
            <person name="Yoshida K."/>
            <person name="Yoshikawa H.-F."/>
            <person name="Zumstein E."/>
            <person name="Yoshikawa H."/>
            <person name="Danchin A."/>
        </authorList>
    </citation>
    <scope>NUCLEOTIDE SEQUENCE [LARGE SCALE GENOMIC DNA]</scope>
    <source>
        <strain>168</strain>
    </source>
</reference>
<reference key="5">
    <citation type="journal article" date="1994" name="Microbiology">
        <title>Analysis of the induction of general stress proteins of Bacillus subtilis.</title>
        <authorList>
            <person name="Voelker U."/>
            <person name="Engelmann S."/>
            <person name="Maul B."/>
            <person name="Riethdorf S."/>
            <person name="Voelker A."/>
            <person name="Schmid R."/>
            <person name="Mach H."/>
            <person name="Hecker M."/>
        </authorList>
    </citation>
    <scope>PROTEIN SEQUENCE OF 2-11</scope>
    <source>
        <strain>168 / IS58</strain>
    </source>
</reference>
<protein>
    <recommendedName>
        <fullName evidence="1">Protein GrpE</fullName>
    </recommendedName>
    <alternativeName>
        <fullName evidence="1">HSP-70 cofactor</fullName>
    </alternativeName>
</protein>
<dbReference type="EMBL" id="X51477">
    <property type="protein sequence ID" value="CAA35841.1"/>
    <property type="molecule type" value="Genomic_DNA"/>
</dbReference>
<dbReference type="EMBL" id="M84964">
    <property type="protein sequence ID" value="AAA22527.1"/>
    <property type="molecule type" value="Genomic_DNA"/>
</dbReference>
<dbReference type="EMBL" id="D84432">
    <property type="protein sequence ID" value="BAA12463.1"/>
    <property type="molecule type" value="Genomic_DNA"/>
</dbReference>
<dbReference type="EMBL" id="AL009126">
    <property type="protein sequence ID" value="CAB14490.1"/>
    <property type="molecule type" value="Genomic_DNA"/>
</dbReference>
<dbReference type="PIR" id="S08418">
    <property type="entry name" value="S08418"/>
</dbReference>
<dbReference type="RefSeq" id="NP_390426.1">
    <property type="nucleotide sequence ID" value="NC_000964.3"/>
</dbReference>
<dbReference type="RefSeq" id="WP_003230005.1">
    <property type="nucleotide sequence ID" value="NZ_OZ025638.1"/>
</dbReference>
<dbReference type="SMR" id="P15874"/>
<dbReference type="FunCoup" id="P15874">
    <property type="interactions" value="662"/>
</dbReference>
<dbReference type="STRING" id="224308.BSU25480"/>
<dbReference type="jPOST" id="P15874"/>
<dbReference type="PaxDb" id="224308-BSU25480"/>
<dbReference type="DNASU" id="937846"/>
<dbReference type="EnsemblBacteria" id="CAB14490">
    <property type="protein sequence ID" value="CAB14490"/>
    <property type="gene ID" value="BSU_25480"/>
</dbReference>
<dbReference type="GeneID" id="937846"/>
<dbReference type="KEGG" id="bsu:BSU25480"/>
<dbReference type="PATRIC" id="fig|224308.179.peg.2769"/>
<dbReference type="eggNOG" id="COG0576">
    <property type="taxonomic scope" value="Bacteria"/>
</dbReference>
<dbReference type="InParanoid" id="P15874"/>
<dbReference type="OrthoDB" id="9812586at2"/>
<dbReference type="PhylomeDB" id="P15874"/>
<dbReference type="BioCyc" id="BSUB:BSU25480-MONOMER"/>
<dbReference type="Proteomes" id="UP000001570">
    <property type="component" value="Chromosome"/>
</dbReference>
<dbReference type="GO" id="GO:0005737">
    <property type="term" value="C:cytoplasm"/>
    <property type="evidence" value="ECO:0007669"/>
    <property type="project" value="UniProtKB-SubCell"/>
</dbReference>
<dbReference type="GO" id="GO:0000774">
    <property type="term" value="F:adenyl-nucleotide exchange factor activity"/>
    <property type="evidence" value="ECO:0000318"/>
    <property type="project" value="GO_Central"/>
</dbReference>
<dbReference type="GO" id="GO:0042803">
    <property type="term" value="F:protein homodimerization activity"/>
    <property type="evidence" value="ECO:0007669"/>
    <property type="project" value="InterPro"/>
</dbReference>
<dbReference type="GO" id="GO:0051087">
    <property type="term" value="F:protein-folding chaperone binding"/>
    <property type="evidence" value="ECO:0007669"/>
    <property type="project" value="InterPro"/>
</dbReference>
<dbReference type="GO" id="GO:0051082">
    <property type="term" value="F:unfolded protein binding"/>
    <property type="evidence" value="ECO:0000318"/>
    <property type="project" value="GO_Central"/>
</dbReference>
<dbReference type="GO" id="GO:0006457">
    <property type="term" value="P:protein folding"/>
    <property type="evidence" value="ECO:0007669"/>
    <property type="project" value="InterPro"/>
</dbReference>
<dbReference type="CDD" id="cd00446">
    <property type="entry name" value="GrpE"/>
    <property type="match status" value="1"/>
</dbReference>
<dbReference type="FunFam" id="2.30.22.10:FF:000001">
    <property type="entry name" value="Protein GrpE"/>
    <property type="match status" value="1"/>
</dbReference>
<dbReference type="FunFam" id="3.90.20.20:FF:000002">
    <property type="entry name" value="Protein GrpE"/>
    <property type="match status" value="1"/>
</dbReference>
<dbReference type="Gene3D" id="3.90.20.20">
    <property type="match status" value="1"/>
</dbReference>
<dbReference type="Gene3D" id="2.30.22.10">
    <property type="entry name" value="Head domain of nucleotide exchange factor GrpE"/>
    <property type="match status" value="1"/>
</dbReference>
<dbReference type="HAMAP" id="MF_01151">
    <property type="entry name" value="GrpE"/>
    <property type="match status" value="1"/>
</dbReference>
<dbReference type="InterPro" id="IPR000740">
    <property type="entry name" value="GrpE"/>
</dbReference>
<dbReference type="InterPro" id="IPR013805">
    <property type="entry name" value="GrpE_coiled_coil"/>
</dbReference>
<dbReference type="InterPro" id="IPR009012">
    <property type="entry name" value="GrpE_head"/>
</dbReference>
<dbReference type="NCBIfam" id="NF010738">
    <property type="entry name" value="PRK14140.1"/>
    <property type="match status" value="1"/>
</dbReference>
<dbReference type="PANTHER" id="PTHR21237">
    <property type="entry name" value="GRPE PROTEIN"/>
    <property type="match status" value="1"/>
</dbReference>
<dbReference type="PANTHER" id="PTHR21237:SF23">
    <property type="entry name" value="GRPE PROTEIN HOMOLOG, MITOCHONDRIAL"/>
    <property type="match status" value="1"/>
</dbReference>
<dbReference type="Pfam" id="PF01025">
    <property type="entry name" value="GrpE"/>
    <property type="match status" value="1"/>
</dbReference>
<dbReference type="PRINTS" id="PR00773">
    <property type="entry name" value="GRPEPROTEIN"/>
</dbReference>
<dbReference type="SUPFAM" id="SSF58014">
    <property type="entry name" value="Coiled-coil domain of nucleotide exchange factor GrpE"/>
    <property type="match status" value="1"/>
</dbReference>
<dbReference type="SUPFAM" id="SSF51064">
    <property type="entry name" value="Head domain of nucleotide exchange factor GrpE"/>
    <property type="match status" value="1"/>
</dbReference>
<dbReference type="PROSITE" id="PS01071">
    <property type="entry name" value="GRPE"/>
    <property type="match status" value="1"/>
</dbReference>
<gene>
    <name evidence="1" type="primary">grpE</name>
    <name type="ordered locus">BSU25480</name>
</gene>